<reference key="1">
    <citation type="submission" date="2006-08" db="EMBL/GenBank/DDBJ databases">
        <title>Complete sequence of Maricaulis maris MCS10.</title>
        <authorList>
            <consortium name="US DOE Joint Genome Institute"/>
            <person name="Copeland A."/>
            <person name="Lucas S."/>
            <person name="Lapidus A."/>
            <person name="Barry K."/>
            <person name="Detter J.C."/>
            <person name="Glavina del Rio T."/>
            <person name="Hammon N."/>
            <person name="Israni S."/>
            <person name="Dalin E."/>
            <person name="Tice H."/>
            <person name="Pitluck S."/>
            <person name="Saunders E."/>
            <person name="Brettin T."/>
            <person name="Bruce D."/>
            <person name="Han C."/>
            <person name="Tapia R."/>
            <person name="Gilna P."/>
            <person name="Schmutz J."/>
            <person name="Larimer F."/>
            <person name="Land M."/>
            <person name="Hauser L."/>
            <person name="Kyrpides N."/>
            <person name="Mikhailova N."/>
            <person name="Viollier P."/>
            <person name="Stephens C."/>
            <person name="Richardson P."/>
        </authorList>
    </citation>
    <scope>NUCLEOTIDE SEQUENCE [LARGE SCALE GENOMIC DNA]</scope>
    <source>
        <strain>MCS10</strain>
    </source>
</reference>
<gene>
    <name evidence="1" type="primary">glmM</name>
    <name type="ordered locus">Mmar10_2490</name>
</gene>
<organism>
    <name type="scientific">Maricaulis maris (strain MCS10)</name>
    <name type="common">Caulobacter maris</name>
    <dbReference type="NCBI Taxonomy" id="394221"/>
    <lineage>
        <taxon>Bacteria</taxon>
        <taxon>Pseudomonadati</taxon>
        <taxon>Pseudomonadota</taxon>
        <taxon>Alphaproteobacteria</taxon>
        <taxon>Maricaulales</taxon>
        <taxon>Maricaulaceae</taxon>
        <taxon>Maricaulis</taxon>
    </lineage>
</organism>
<comment type="function">
    <text evidence="1">Catalyzes the conversion of glucosamine-6-phosphate to glucosamine-1-phosphate.</text>
</comment>
<comment type="catalytic activity">
    <reaction evidence="1">
        <text>alpha-D-glucosamine 1-phosphate = D-glucosamine 6-phosphate</text>
        <dbReference type="Rhea" id="RHEA:23424"/>
        <dbReference type="ChEBI" id="CHEBI:58516"/>
        <dbReference type="ChEBI" id="CHEBI:58725"/>
        <dbReference type="EC" id="5.4.2.10"/>
    </reaction>
</comment>
<comment type="cofactor">
    <cofactor evidence="1">
        <name>Mg(2+)</name>
        <dbReference type="ChEBI" id="CHEBI:18420"/>
    </cofactor>
    <text evidence="1">Binds 1 Mg(2+) ion per subunit.</text>
</comment>
<comment type="PTM">
    <text evidence="1">Activated by phosphorylation.</text>
</comment>
<comment type="similarity">
    <text evidence="1">Belongs to the phosphohexose mutase family.</text>
</comment>
<protein>
    <recommendedName>
        <fullName evidence="1">Phosphoglucosamine mutase</fullName>
        <ecNumber evidence="1">5.4.2.10</ecNumber>
    </recommendedName>
</protein>
<accession>Q0ALR7</accession>
<evidence type="ECO:0000255" key="1">
    <source>
        <dbReference type="HAMAP-Rule" id="MF_01554"/>
    </source>
</evidence>
<dbReference type="EC" id="5.4.2.10" evidence="1"/>
<dbReference type="EMBL" id="CP000449">
    <property type="protein sequence ID" value="ABI66776.1"/>
    <property type="molecule type" value="Genomic_DNA"/>
</dbReference>
<dbReference type="RefSeq" id="WP_011644420.1">
    <property type="nucleotide sequence ID" value="NC_008347.1"/>
</dbReference>
<dbReference type="SMR" id="Q0ALR7"/>
<dbReference type="STRING" id="394221.Mmar10_2490"/>
<dbReference type="KEGG" id="mmr:Mmar10_2490"/>
<dbReference type="eggNOG" id="COG1109">
    <property type="taxonomic scope" value="Bacteria"/>
</dbReference>
<dbReference type="HOGENOM" id="CLU_016950_7_0_5"/>
<dbReference type="OrthoDB" id="9803322at2"/>
<dbReference type="Proteomes" id="UP000001964">
    <property type="component" value="Chromosome"/>
</dbReference>
<dbReference type="GO" id="GO:0005829">
    <property type="term" value="C:cytosol"/>
    <property type="evidence" value="ECO:0007669"/>
    <property type="project" value="TreeGrafter"/>
</dbReference>
<dbReference type="GO" id="GO:0000287">
    <property type="term" value="F:magnesium ion binding"/>
    <property type="evidence" value="ECO:0007669"/>
    <property type="project" value="UniProtKB-UniRule"/>
</dbReference>
<dbReference type="GO" id="GO:0008966">
    <property type="term" value="F:phosphoglucosamine mutase activity"/>
    <property type="evidence" value="ECO:0007669"/>
    <property type="project" value="UniProtKB-UniRule"/>
</dbReference>
<dbReference type="GO" id="GO:0004615">
    <property type="term" value="F:phosphomannomutase activity"/>
    <property type="evidence" value="ECO:0007669"/>
    <property type="project" value="TreeGrafter"/>
</dbReference>
<dbReference type="GO" id="GO:0005975">
    <property type="term" value="P:carbohydrate metabolic process"/>
    <property type="evidence" value="ECO:0007669"/>
    <property type="project" value="InterPro"/>
</dbReference>
<dbReference type="GO" id="GO:0009252">
    <property type="term" value="P:peptidoglycan biosynthetic process"/>
    <property type="evidence" value="ECO:0007669"/>
    <property type="project" value="TreeGrafter"/>
</dbReference>
<dbReference type="GO" id="GO:0006048">
    <property type="term" value="P:UDP-N-acetylglucosamine biosynthetic process"/>
    <property type="evidence" value="ECO:0007669"/>
    <property type="project" value="TreeGrafter"/>
</dbReference>
<dbReference type="CDD" id="cd05802">
    <property type="entry name" value="GlmM"/>
    <property type="match status" value="1"/>
</dbReference>
<dbReference type="FunFam" id="3.40.120.10:FF:000001">
    <property type="entry name" value="Phosphoglucosamine mutase"/>
    <property type="match status" value="1"/>
</dbReference>
<dbReference type="FunFam" id="3.40.120.10:FF:000002">
    <property type="entry name" value="Phosphoglucosamine mutase"/>
    <property type="match status" value="1"/>
</dbReference>
<dbReference type="Gene3D" id="3.40.120.10">
    <property type="entry name" value="Alpha-D-Glucose-1,6-Bisphosphate, subunit A, domain 3"/>
    <property type="match status" value="3"/>
</dbReference>
<dbReference type="Gene3D" id="3.30.310.50">
    <property type="entry name" value="Alpha-D-phosphohexomutase, C-terminal domain"/>
    <property type="match status" value="1"/>
</dbReference>
<dbReference type="HAMAP" id="MF_01554_B">
    <property type="entry name" value="GlmM_B"/>
    <property type="match status" value="1"/>
</dbReference>
<dbReference type="InterPro" id="IPR005844">
    <property type="entry name" value="A-D-PHexomutase_a/b/a-I"/>
</dbReference>
<dbReference type="InterPro" id="IPR016055">
    <property type="entry name" value="A-D-PHexomutase_a/b/a-I/II/III"/>
</dbReference>
<dbReference type="InterPro" id="IPR005845">
    <property type="entry name" value="A-D-PHexomutase_a/b/a-II"/>
</dbReference>
<dbReference type="InterPro" id="IPR005846">
    <property type="entry name" value="A-D-PHexomutase_a/b/a-III"/>
</dbReference>
<dbReference type="InterPro" id="IPR005843">
    <property type="entry name" value="A-D-PHexomutase_C"/>
</dbReference>
<dbReference type="InterPro" id="IPR036900">
    <property type="entry name" value="A-D-PHexomutase_C_sf"/>
</dbReference>
<dbReference type="InterPro" id="IPR016066">
    <property type="entry name" value="A-D-PHexomutase_CS"/>
</dbReference>
<dbReference type="InterPro" id="IPR005841">
    <property type="entry name" value="Alpha-D-phosphohexomutase_SF"/>
</dbReference>
<dbReference type="InterPro" id="IPR006352">
    <property type="entry name" value="GlmM_bact"/>
</dbReference>
<dbReference type="InterPro" id="IPR050060">
    <property type="entry name" value="Phosphoglucosamine_mutase"/>
</dbReference>
<dbReference type="NCBIfam" id="TIGR01455">
    <property type="entry name" value="glmM"/>
    <property type="match status" value="1"/>
</dbReference>
<dbReference type="NCBIfam" id="NF008139">
    <property type="entry name" value="PRK10887.1"/>
    <property type="match status" value="1"/>
</dbReference>
<dbReference type="PANTHER" id="PTHR42946:SF1">
    <property type="entry name" value="PHOSPHOGLUCOMUTASE (ALPHA-D-GLUCOSE-1,6-BISPHOSPHATE-DEPENDENT)"/>
    <property type="match status" value="1"/>
</dbReference>
<dbReference type="PANTHER" id="PTHR42946">
    <property type="entry name" value="PHOSPHOHEXOSE MUTASE"/>
    <property type="match status" value="1"/>
</dbReference>
<dbReference type="Pfam" id="PF02878">
    <property type="entry name" value="PGM_PMM_I"/>
    <property type="match status" value="1"/>
</dbReference>
<dbReference type="Pfam" id="PF02879">
    <property type="entry name" value="PGM_PMM_II"/>
    <property type="match status" value="1"/>
</dbReference>
<dbReference type="Pfam" id="PF02880">
    <property type="entry name" value="PGM_PMM_III"/>
    <property type="match status" value="1"/>
</dbReference>
<dbReference type="Pfam" id="PF00408">
    <property type="entry name" value="PGM_PMM_IV"/>
    <property type="match status" value="1"/>
</dbReference>
<dbReference type="PRINTS" id="PR00509">
    <property type="entry name" value="PGMPMM"/>
</dbReference>
<dbReference type="SUPFAM" id="SSF55957">
    <property type="entry name" value="Phosphoglucomutase, C-terminal domain"/>
    <property type="match status" value="1"/>
</dbReference>
<dbReference type="SUPFAM" id="SSF53738">
    <property type="entry name" value="Phosphoglucomutase, first 3 domains"/>
    <property type="match status" value="3"/>
</dbReference>
<dbReference type="PROSITE" id="PS00710">
    <property type="entry name" value="PGM_PMM"/>
    <property type="match status" value="1"/>
</dbReference>
<proteinExistence type="inferred from homology"/>
<keyword id="KW-0413">Isomerase</keyword>
<keyword id="KW-0460">Magnesium</keyword>
<keyword id="KW-0479">Metal-binding</keyword>
<keyword id="KW-0597">Phosphoprotein</keyword>
<keyword id="KW-1185">Reference proteome</keyword>
<sequence length="449" mass="48078">MGKKYFGTDGVRGQTNSFPMTAENALRLGMAAGRYFVRHTGRHSVVIGKDTRLSGYMIESALVAGFTSVGMDVFQFGPLPTPAVALMTRSLRADLGVMITASHNPYHDNGMKLFGPDGRKLDDKAELEIEALMDGSLVDGLAAPSDLGRAKRVDDAQARYVEIVKSSFPRAQRLSNLRLVVDCANGAGYKVAPAALWELGADVIPIGVEPNGFNVNEECGSTAPARLSKEVIKYRADLGIALDGDGDRVVLCDEKGRVIDGDQILGLLAGHWQDIGELRHPAIVSTVMSNLGLEQYLAGRGIALERTRVGDRYVSERMRETGINLGGEASGHIVMPDYSPTGDGLIAALQVLRVLGDSGKRASELLKVFKPAPQLLENVRVPRGRKPLESEAVKAAIAEAEVRMGVAGRLVVRASGTEPVVRVMAEGEQKLIRSVVDDVRGAIETVAQG</sequence>
<name>GLMM_MARMM</name>
<feature type="chain" id="PRO_0000301335" description="Phosphoglucosamine mutase">
    <location>
        <begin position="1"/>
        <end position="449"/>
    </location>
</feature>
<feature type="active site" description="Phosphoserine intermediate" evidence="1">
    <location>
        <position position="102"/>
    </location>
</feature>
<feature type="binding site" description="via phosphate group" evidence="1">
    <location>
        <position position="102"/>
    </location>
    <ligand>
        <name>Mg(2+)</name>
        <dbReference type="ChEBI" id="CHEBI:18420"/>
    </ligand>
</feature>
<feature type="binding site" evidence="1">
    <location>
        <position position="243"/>
    </location>
    <ligand>
        <name>Mg(2+)</name>
        <dbReference type="ChEBI" id="CHEBI:18420"/>
    </ligand>
</feature>
<feature type="binding site" evidence="1">
    <location>
        <position position="245"/>
    </location>
    <ligand>
        <name>Mg(2+)</name>
        <dbReference type="ChEBI" id="CHEBI:18420"/>
    </ligand>
</feature>
<feature type="binding site" evidence="1">
    <location>
        <position position="247"/>
    </location>
    <ligand>
        <name>Mg(2+)</name>
        <dbReference type="ChEBI" id="CHEBI:18420"/>
    </ligand>
</feature>
<feature type="modified residue" description="Phosphoserine" evidence="1">
    <location>
        <position position="102"/>
    </location>
</feature>